<gene>
    <name type="primary">BRR6</name>
    <name type="ordered locus">YGL247W</name>
    <name type="ORF">NRA197</name>
</gene>
<sequence length="197" mass="22807">MELRSFSRQPDGILANPRLGREEVLEGEHPQDARLARQSIWLSPSLIAEYIQLFFNFIIGTIGLSLAIKFILMIRNDVNLKLEHNVREELDKIATCKSRYFENQCEPHMRVPALEVRCNEWSKCMNKEIVSGSDYQWAKAWARTLAEVINAFFEAFSIRSFLFILISIIGIIFVTNTSFGSYRVYLNNKDTKSVRHA</sequence>
<feature type="chain" id="PRO_0000202707" description="Nucleus export protein BRR6">
    <location>
        <begin position="1"/>
        <end position="197"/>
    </location>
</feature>
<feature type="transmembrane region" description="Helical" evidence="1">
    <location>
        <begin position="54"/>
        <end position="74"/>
    </location>
</feature>
<feature type="transmembrane region" description="Helical" evidence="1">
    <location>
        <begin position="161"/>
        <end position="181"/>
    </location>
</feature>
<accession>P53062</accession>
<accession>D6VV88</accession>
<evidence type="ECO:0000255" key="1"/>
<evidence type="ECO:0000269" key="2">
    <source>
    </source>
</evidence>
<evidence type="ECO:0000269" key="3">
    <source>
    </source>
</evidence>
<evidence type="ECO:0000269" key="4">
    <source>
    </source>
</evidence>
<evidence type="ECO:0000269" key="5">
    <source>
    </source>
</evidence>
<evidence type="ECO:0000305" key="6"/>
<keyword id="KW-0472">Membrane</keyword>
<keyword id="KW-0509">mRNA transport</keyword>
<keyword id="KW-0539">Nucleus</keyword>
<keyword id="KW-1185">Reference proteome</keyword>
<keyword id="KW-0812">Transmembrane</keyword>
<keyword id="KW-1133">Transmembrane helix</keyword>
<keyword id="KW-0813">Transport</keyword>
<name>BRR6_YEAST</name>
<dbReference type="EMBL" id="X94357">
    <property type="protein sequence ID" value="CAA64140.1"/>
    <property type="molecule type" value="Genomic_DNA"/>
</dbReference>
<dbReference type="EMBL" id="Z72769">
    <property type="protein sequence ID" value="CAA96967.1"/>
    <property type="molecule type" value="Genomic_DNA"/>
</dbReference>
<dbReference type="EMBL" id="AY693171">
    <property type="protein sequence ID" value="AAT93190.1"/>
    <property type="molecule type" value="Genomic_DNA"/>
</dbReference>
<dbReference type="EMBL" id="BK006941">
    <property type="protein sequence ID" value="DAA07872.1"/>
    <property type="molecule type" value="Genomic_DNA"/>
</dbReference>
<dbReference type="PIR" id="S61614">
    <property type="entry name" value="S61614"/>
</dbReference>
<dbReference type="RefSeq" id="NP_011267.1">
    <property type="nucleotide sequence ID" value="NM_001181113.1"/>
</dbReference>
<dbReference type="BioGRID" id="33032">
    <property type="interactions" value="362"/>
</dbReference>
<dbReference type="DIP" id="DIP-7322N"/>
<dbReference type="FunCoup" id="P53062">
    <property type="interactions" value="26"/>
</dbReference>
<dbReference type="IntAct" id="P53062">
    <property type="interactions" value="2"/>
</dbReference>
<dbReference type="STRING" id="4932.YGL247W"/>
<dbReference type="TCDB" id="9.A.34.1.1">
    <property type="family name" value="the nuclear pore complex biogenesis (npc-b) family"/>
</dbReference>
<dbReference type="PaxDb" id="4932-YGL247W"/>
<dbReference type="PeptideAtlas" id="P53062"/>
<dbReference type="EnsemblFungi" id="YGL247W_mRNA">
    <property type="protein sequence ID" value="YGL247W"/>
    <property type="gene ID" value="YGL247W"/>
</dbReference>
<dbReference type="GeneID" id="852645"/>
<dbReference type="KEGG" id="sce:YGL247W"/>
<dbReference type="AGR" id="SGD:S000003216"/>
<dbReference type="SGD" id="S000003216">
    <property type="gene designation" value="BRR6"/>
</dbReference>
<dbReference type="VEuPathDB" id="FungiDB:YGL247W"/>
<dbReference type="eggNOG" id="KOG4503">
    <property type="taxonomic scope" value="Eukaryota"/>
</dbReference>
<dbReference type="HOGENOM" id="CLU_107711_0_0_1"/>
<dbReference type="InParanoid" id="P53062"/>
<dbReference type="OMA" id="FGSYRVY"/>
<dbReference type="OrthoDB" id="5961at2759"/>
<dbReference type="BioCyc" id="YEAST:G3O-30718-MONOMER"/>
<dbReference type="BioGRID-ORCS" id="852645">
    <property type="hits" value="6 hits in 10 CRISPR screens"/>
</dbReference>
<dbReference type="PRO" id="PR:P53062"/>
<dbReference type="Proteomes" id="UP000002311">
    <property type="component" value="Chromosome VII"/>
</dbReference>
<dbReference type="RNAct" id="P53062">
    <property type="molecule type" value="protein"/>
</dbReference>
<dbReference type="GO" id="GO:0071944">
    <property type="term" value="C:cell periphery"/>
    <property type="evidence" value="ECO:0007005"/>
    <property type="project" value="SGD"/>
</dbReference>
<dbReference type="GO" id="GO:0005783">
    <property type="term" value="C:endoplasmic reticulum"/>
    <property type="evidence" value="ECO:0007005"/>
    <property type="project" value="SGD"/>
</dbReference>
<dbReference type="GO" id="GO:0005635">
    <property type="term" value="C:nuclear envelope"/>
    <property type="evidence" value="ECO:0000314"/>
    <property type="project" value="SGD"/>
</dbReference>
<dbReference type="GO" id="GO:0031965">
    <property type="term" value="C:nuclear membrane"/>
    <property type="evidence" value="ECO:0007669"/>
    <property type="project" value="UniProtKB-SubCell"/>
</dbReference>
<dbReference type="GO" id="GO:0003682">
    <property type="term" value="F:chromatin binding"/>
    <property type="evidence" value="ECO:0000314"/>
    <property type="project" value="SGD"/>
</dbReference>
<dbReference type="GO" id="GO:0055088">
    <property type="term" value="P:lipid homeostasis"/>
    <property type="evidence" value="ECO:0000315"/>
    <property type="project" value="SGD"/>
</dbReference>
<dbReference type="GO" id="GO:0051028">
    <property type="term" value="P:mRNA transport"/>
    <property type="evidence" value="ECO:0007669"/>
    <property type="project" value="UniProtKB-KW"/>
</dbReference>
<dbReference type="GO" id="GO:0006998">
    <property type="term" value="P:nuclear envelope organization"/>
    <property type="evidence" value="ECO:0000315"/>
    <property type="project" value="SGD"/>
</dbReference>
<dbReference type="GO" id="GO:0006357">
    <property type="term" value="P:regulation of transcription by RNA polymerase II"/>
    <property type="evidence" value="ECO:0000315"/>
    <property type="project" value="SGD"/>
</dbReference>
<dbReference type="InterPro" id="IPR040202">
    <property type="entry name" value="Brl1/Brr6"/>
</dbReference>
<dbReference type="InterPro" id="IPR018767">
    <property type="entry name" value="Brl1/Brr6_dom"/>
</dbReference>
<dbReference type="PANTHER" id="PTHR28136">
    <property type="entry name" value="NUCLEUS EXPORT PROTEIN BRR6"/>
    <property type="match status" value="1"/>
</dbReference>
<dbReference type="PANTHER" id="PTHR28136:SF5">
    <property type="entry name" value="NUCLEUS EXPORT PROTEIN BRR6"/>
    <property type="match status" value="1"/>
</dbReference>
<dbReference type="Pfam" id="PF10104">
    <property type="entry name" value="Brr6_like_C_C"/>
    <property type="match status" value="1"/>
</dbReference>
<dbReference type="SMART" id="SM01042">
    <property type="entry name" value="Brr6_like_C_C"/>
    <property type="match status" value="1"/>
</dbReference>
<proteinExistence type="evidence at protein level"/>
<protein>
    <recommendedName>
        <fullName>Nucleus export protein BRR6</fullName>
    </recommendedName>
    <alternativeName>
        <fullName>Bad response to refrigeration protein 6</fullName>
    </alternativeName>
</protein>
<organism>
    <name type="scientific">Saccharomyces cerevisiae (strain ATCC 204508 / S288c)</name>
    <name type="common">Baker's yeast</name>
    <dbReference type="NCBI Taxonomy" id="559292"/>
    <lineage>
        <taxon>Eukaryota</taxon>
        <taxon>Fungi</taxon>
        <taxon>Dikarya</taxon>
        <taxon>Ascomycota</taxon>
        <taxon>Saccharomycotina</taxon>
        <taxon>Saccharomycetes</taxon>
        <taxon>Saccharomycetales</taxon>
        <taxon>Saccharomycetaceae</taxon>
        <taxon>Saccharomyces</taxon>
    </lineage>
</organism>
<comment type="function">
    <text evidence="2 5">Required for mRNA nuclear export. Involved in the nuclear pore complex (NPC) distribution and nuclear envelope morphology.</text>
</comment>
<comment type="subunit">
    <text evidence="5">Interacts with BRL1.</text>
</comment>
<comment type="subcellular location">
    <subcellularLocation>
        <location evidence="2 3">Nucleus membrane</location>
        <topology evidence="2 3">Multi-pass membrane protein</topology>
    </subcellularLocation>
</comment>
<comment type="miscellaneous">
    <text evidence="4">Present with 125 molecules/cell in log phase SD medium.</text>
</comment>
<comment type="similarity">
    <text evidence="6">Belongs to the BRL1/BRR6 family.</text>
</comment>
<reference key="1">
    <citation type="journal article" date="1996" name="Yeast">
        <title>Sequence of a 39,411 bp DNA fragment covering the left end of chromosome VII of Saccharomyces cerevisiae.</title>
        <authorList>
            <person name="Coissac E."/>
            <person name="Maillier E."/>
            <person name="Robineau S."/>
            <person name="Netter P."/>
        </authorList>
    </citation>
    <scope>NUCLEOTIDE SEQUENCE [GENOMIC DNA]</scope>
    <source>
        <strain>ATCC 96604 / S288c / FY1679</strain>
    </source>
</reference>
<reference key="2">
    <citation type="journal article" date="1997" name="Nature">
        <title>The nucleotide sequence of Saccharomyces cerevisiae chromosome VII.</title>
        <authorList>
            <person name="Tettelin H."/>
            <person name="Agostoni-Carbone M.L."/>
            <person name="Albermann K."/>
            <person name="Albers M."/>
            <person name="Arroyo J."/>
            <person name="Backes U."/>
            <person name="Barreiros T."/>
            <person name="Bertani I."/>
            <person name="Bjourson A.J."/>
            <person name="Brueckner M."/>
            <person name="Bruschi C.V."/>
            <person name="Carignani G."/>
            <person name="Castagnoli L."/>
            <person name="Cerdan E."/>
            <person name="Clemente M.L."/>
            <person name="Coblenz A."/>
            <person name="Coglievina M."/>
            <person name="Coissac E."/>
            <person name="Defoor E."/>
            <person name="Del Bino S."/>
            <person name="Delius H."/>
            <person name="Delneri D."/>
            <person name="de Wergifosse P."/>
            <person name="Dujon B."/>
            <person name="Durand P."/>
            <person name="Entian K.-D."/>
            <person name="Eraso P."/>
            <person name="Escribano V."/>
            <person name="Fabiani L."/>
            <person name="Fartmann B."/>
            <person name="Feroli F."/>
            <person name="Feuermann M."/>
            <person name="Frontali L."/>
            <person name="Garcia-Gonzalez M."/>
            <person name="Garcia-Saez M.I."/>
            <person name="Goffeau A."/>
            <person name="Guerreiro P."/>
            <person name="Hani J."/>
            <person name="Hansen M."/>
            <person name="Hebling U."/>
            <person name="Hernandez K."/>
            <person name="Heumann K."/>
            <person name="Hilger F."/>
            <person name="Hofmann B."/>
            <person name="Indge K.J."/>
            <person name="James C.M."/>
            <person name="Klima R."/>
            <person name="Koetter P."/>
            <person name="Kramer B."/>
            <person name="Kramer W."/>
            <person name="Lauquin G."/>
            <person name="Leuther H."/>
            <person name="Louis E.J."/>
            <person name="Maillier E."/>
            <person name="Marconi A."/>
            <person name="Martegani E."/>
            <person name="Mazon M.J."/>
            <person name="Mazzoni C."/>
            <person name="McReynolds A.D.K."/>
            <person name="Melchioretto P."/>
            <person name="Mewes H.-W."/>
            <person name="Minenkova O."/>
            <person name="Mueller-Auer S."/>
            <person name="Nawrocki A."/>
            <person name="Netter P."/>
            <person name="Neu R."/>
            <person name="Nombela C."/>
            <person name="Oliver S.G."/>
            <person name="Panzeri L."/>
            <person name="Paoluzi S."/>
            <person name="Plevani P."/>
            <person name="Portetelle D."/>
            <person name="Portillo F."/>
            <person name="Potier S."/>
            <person name="Purnelle B."/>
            <person name="Rieger M."/>
            <person name="Riles L."/>
            <person name="Rinaldi T."/>
            <person name="Robben J."/>
            <person name="Rodrigues-Pousada C."/>
            <person name="Rodriguez-Belmonte E."/>
            <person name="Rodriguez-Torres A.M."/>
            <person name="Rose M."/>
            <person name="Ruzzi M."/>
            <person name="Saliola M."/>
            <person name="Sanchez-Perez M."/>
            <person name="Schaefer B."/>
            <person name="Schaefer M."/>
            <person name="Scharfe M."/>
            <person name="Schmidheini T."/>
            <person name="Schreer A."/>
            <person name="Skala J."/>
            <person name="Souciet J.-L."/>
            <person name="Steensma H.Y."/>
            <person name="Talla E."/>
            <person name="Thierry A."/>
            <person name="Vandenbol M."/>
            <person name="van der Aart Q.J.M."/>
            <person name="Van Dyck L."/>
            <person name="Vanoni M."/>
            <person name="Verhasselt P."/>
            <person name="Voet M."/>
            <person name="Volckaert G."/>
            <person name="Wambutt R."/>
            <person name="Watson M.D."/>
            <person name="Weber N."/>
            <person name="Wedler E."/>
            <person name="Wedler H."/>
            <person name="Wipfli P."/>
            <person name="Wolf K."/>
            <person name="Wright L.F."/>
            <person name="Zaccaria P."/>
            <person name="Zimmermann M."/>
            <person name="Zollner A."/>
            <person name="Kleine K."/>
        </authorList>
    </citation>
    <scope>NUCLEOTIDE SEQUENCE [LARGE SCALE GENOMIC DNA]</scope>
    <source>
        <strain>ATCC 204508 / S288c</strain>
    </source>
</reference>
<reference key="3">
    <citation type="journal article" date="2014" name="G3 (Bethesda)">
        <title>The reference genome sequence of Saccharomyces cerevisiae: Then and now.</title>
        <authorList>
            <person name="Engel S.R."/>
            <person name="Dietrich F.S."/>
            <person name="Fisk D.G."/>
            <person name="Binkley G."/>
            <person name="Balakrishnan R."/>
            <person name="Costanzo M.C."/>
            <person name="Dwight S.S."/>
            <person name="Hitz B.C."/>
            <person name="Karra K."/>
            <person name="Nash R.S."/>
            <person name="Weng S."/>
            <person name="Wong E.D."/>
            <person name="Lloyd P."/>
            <person name="Skrzypek M.S."/>
            <person name="Miyasato S.R."/>
            <person name="Simison M."/>
            <person name="Cherry J.M."/>
        </authorList>
    </citation>
    <scope>GENOME REANNOTATION</scope>
    <source>
        <strain>ATCC 204508 / S288c</strain>
    </source>
</reference>
<reference key="4">
    <citation type="journal article" date="2007" name="Genome Res.">
        <title>Approaching a complete repository of sequence-verified protein-encoding clones for Saccharomyces cerevisiae.</title>
        <authorList>
            <person name="Hu Y."/>
            <person name="Rolfs A."/>
            <person name="Bhullar B."/>
            <person name="Murthy T.V.S."/>
            <person name="Zhu C."/>
            <person name="Berger M.F."/>
            <person name="Camargo A.A."/>
            <person name="Kelley F."/>
            <person name="McCarron S."/>
            <person name="Jepson D."/>
            <person name="Richardson A."/>
            <person name="Raphael J."/>
            <person name="Moreira D."/>
            <person name="Taycher E."/>
            <person name="Zuo D."/>
            <person name="Mohr S."/>
            <person name="Kane M.F."/>
            <person name="Williamson J."/>
            <person name="Simpson A.J.G."/>
            <person name="Bulyk M.L."/>
            <person name="Harlow E."/>
            <person name="Marsischky G."/>
            <person name="Kolodner R.D."/>
            <person name="LaBaer J."/>
        </authorList>
    </citation>
    <scope>NUCLEOTIDE SEQUENCE [GENOMIC DNA]</scope>
    <source>
        <strain>ATCC 204508 / S288c</strain>
    </source>
</reference>
<reference key="5">
    <citation type="journal article" date="2001" name="EMBO J.">
        <title>An essential nuclear envelope integral membrane protein, Brr6p, required for nuclear transport.</title>
        <authorList>
            <person name="de Bruyn Kops A."/>
            <person name="Guthrie C."/>
        </authorList>
    </citation>
    <scope>FUNCTION</scope>
    <scope>SUBCELLULAR LOCATION</scope>
    <scope>TOPOLOGY</scope>
</reference>
<reference key="6">
    <citation type="journal article" date="2003" name="Nature">
        <title>Global analysis of protein localization in budding yeast.</title>
        <authorList>
            <person name="Huh W.-K."/>
            <person name="Falvo J.V."/>
            <person name="Gerke L.C."/>
            <person name="Carroll A.S."/>
            <person name="Howson R.W."/>
            <person name="Weissman J.S."/>
            <person name="O'Shea E.K."/>
        </authorList>
    </citation>
    <scope>SUBCELLULAR LOCATION [LARGE SCALE ANALYSIS]</scope>
</reference>
<reference key="7">
    <citation type="journal article" date="2003" name="Nature">
        <title>Global analysis of protein expression in yeast.</title>
        <authorList>
            <person name="Ghaemmaghami S."/>
            <person name="Huh W.-K."/>
            <person name="Bower K."/>
            <person name="Howson R.W."/>
            <person name="Belle A."/>
            <person name="Dephoure N."/>
            <person name="O'Shea E.K."/>
            <person name="Weissman J.S."/>
        </authorList>
    </citation>
    <scope>LEVEL OF PROTEIN EXPRESSION [LARGE SCALE ANALYSIS]</scope>
</reference>
<reference key="8">
    <citation type="journal article" date="2005" name="Traffic">
        <title>Brl1p - a novel nuclear envelope protein required for nuclear transport.</title>
        <authorList>
            <person name="Saitoh Y.-H."/>
            <person name="Ogawa K."/>
            <person name="Nishimoto T."/>
        </authorList>
    </citation>
    <scope>FUNCTION</scope>
    <scope>INTERACTION WITH BRL1</scope>
</reference>